<dbReference type="EC" id="3.6.4.10" evidence="5"/>
<dbReference type="EMBL" id="CR861074">
    <property type="protein sequence ID" value="CAH93155.1"/>
    <property type="molecule type" value="mRNA"/>
</dbReference>
<dbReference type="EMBL" id="NDHI03003414">
    <property type="protein sequence ID" value="PNJ59516.1"/>
    <property type="molecule type" value="Genomic_DNA"/>
</dbReference>
<dbReference type="EMBL" id="NDHI03003414">
    <property type="protein sequence ID" value="PNJ59517.1"/>
    <property type="molecule type" value="Genomic_DNA"/>
</dbReference>
<dbReference type="RefSeq" id="NP_001126860.1">
    <property type="nucleotide sequence ID" value="NM_001133388.1"/>
</dbReference>
<dbReference type="SMR" id="Q5R511"/>
<dbReference type="FunCoup" id="Q5R511">
    <property type="interactions" value="1941"/>
</dbReference>
<dbReference type="STRING" id="9601.ENSPPYP00000017699"/>
<dbReference type="Ensembl" id="ENSPPYT00000018411.3">
    <property type="protein sequence ID" value="ENSPPYP00000017699.3"/>
    <property type="gene ID" value="ENSPPYG00000015830.3"/>
</dbReference>
<dbReference type="GeneID" id="100173869"/>
<dbReference type="KEGG" id="pon:100173869"/>
<dbReference type="CTD" id="3313"/>
<dbReference type="eggNOG" id="KOG0102">
    <property type="taxonomic scope" value="Eukaryota"/>
</dbReference>
<dbReference type="GeneTree" id="ENSGT00920000149123"/>
<dbReference type="HOGENOM" id="CLU_005965_2_1_1"/>
<dbReference type="InParanoid" id="Q5R511"/>
<dbReference type="OMA" id="MGTDWKI"/>
<dbReference type="OrthoDB" id="2401965at2759"/>
<dbReference type="TreeFam" id="TF105046"/>
<dbReference type="Proteomes" id="UP000001595">
    <property type="component" value="Chromosome 5"/>
</dbReference>
<dbReference type="GO" id="GO:0005737">
    <property type="term" value="C:cytoplasm"/>
    <property type="evidence" value="ECO:0000250"/>
    <property type="project" value="UniProtKB"/>
</dbReference>
<dbReference type="GO" id="GO:0005759">
    <property type="term" value="C:mitochondrial matrix"/>
    <property type="evidence" value="ECO:0000250"/>
    <property type="project" value="UniProtKB"/>
</dbReference>
<dbReference type="GO" id="GO:0042645">
    <property type="term" value="C:mitochondrial nucleoid"/>
    <property type="evidence" value="ECO:0007669"/>
    <property type="project" value="Ensembl"/>
</dbReference>
<dbReference type="GO" id="GO:0005739">
    <property type="term" value="C:mitochondrion"/>
    <property type="evidence" value="ECO:0000250"/>
    <property type="project" value="UniProtKB"/>
</dbReference>
<dbReference type="GO" id="GO:0005730">
    <property type="term" value="C:nucleolus"/>
    <property type="evidence" value="ECO:0007669"/>
    <property type="project" value="UniProtKB-SubCell"/>
</dbReference>
<dbReference type="GO" id="GO:0005524">
    <property type="term" value="F:ATP binding"/>
    <property type="evidence" value="ECO:0007669"/>
    <property type="project" value="UniProtKB-KW"/>
</dbReference>
<dbReference type="GO" id="GO:0016887">
    <property type="term" value="F:ATP hydrolysis activity"/>
    <property type="evidence" value="ECO:0007669"/>
    <property type="project" value="Ensembl"/>
</dbReference>
<dbReference type="GO" id="GO:0140662">
    <property type="term" value="F:ATP-dependent protein folding chaperone"/>
    <property type="evidence" value="ECO:0007669"/>
    <property type="project" value="InterPro"/>
</dbReference>
<dbReference type="GO" id="GO:0031625">
    <property type="term" value="F:ubiquitin protein ligase binding"/>
    <property type="evidence" value="ECO:0007669"/>
    <property type="project" value="Ensembl"/>
</dbReference>
<dbReference type="GO" id="GO:0051082">
    <property type="term" value="F:unfolded protein binding"/>
    <property type="evidence" value="ECO:0007669"/>
    <property type="project" value="InterPro"/>
</dbReference>
<dbReference type="GO" id="GO:0036444">
    <property type="term" value="P:calcium import into the mitochondrion"/>
    <property type="evidence" value="ECO:0000250"/>
    <property type="project" value="UniProtKB"/>
</dbReference>
<dbReference type="GO" id="GO:0030218">
    <property type="term" value="P:erythrocyte differentiation"/>
    <property type="evidence" value="ECO:0007669"/>
    <property type="project" value="Ensembl"/>
</dbReference>
<dbReference type="GO" id="GO:0016226">
    <property type="term" value="P:iron-sulfur cluster assembly"/>
    <property type="evidence" value="ECO:0007669"/>
    <property type="project" value="Ensembl"/>
</dbReference>
<dbReference type="GO" id="GO:0045647">
    <property type="term" value="P:negative regulation of erythrocyte differentiation"/>
    <property type="evidence" value="ECO:0007669"/>
    <property type="project" value="Ensembl"/>
</dbReference>
<dbReference type="GO" id="GO:1902037">
    <property type="term" value="P:negative regulation of hematopoietic stem cell differentiation"/>
    <property type="evidence" value="ECO:0007669"/>
    <property type="project" value="Ensembl"/>
</dbReference>
<dbReference type="GO" id="GO:1903707">
    <property type="term" value="P:negative regulation of hemopoiesis"/>
    <property type="evidence" value="ECO:0007669"/>
    <property type="project" value="Ensembl"/>
</dbReference>
<dbReference type="GO" id="GO:0043065">
    <property type="term" value="P:positive regulation of apoptotic process"/>
    <property type="evidence" value="ECO:0007669"/>
    <property type="project" value="Ensembl"/>
</dbReference>
<dbReference type="GO" id="GO:0006611">
    <property type="term" value="P:protein export from nucleus"/>
    <property type="evidence" value="ECO:0007669"/>
    <property type="project" value="Ensembl"/>
</dbReference>
<dbReference type="GO" id="GO:0045646">
    <property type="term" value="P:regulation of erythrocyte differentiation"/>
    <property type="evidence" value="ECO:0000250"/>
    <property type="project" value="UniProtKB"/>
</dbReference>
<dbReference type="CDD" id="cd11733">
    <property type="entry name" value="ASKHA_NBD_HSP70_HSPA9"/>
    <property type="match status" value="1"/>
</dbReference>
<dbReference type="FunFam" id="2.60.34.10:FF:000014">
    <property type="entry name" value="Chaperone protein DnaK HSP70"/>
    <property type="match status" value="1"/>
</dbReference>
<dbReference type="FunFam" id="3.30.420.40:FF:000020">
    <property type="entry name" value="Chaperone protein HscA homolog"/>
    <property type="match status" value="1"/>
</dbReference>
<dbReference type="FunFam" id="3.30.30.30:FF:000003">
    <property type="entry name" value="Heat shock protein 9"/>
    <property type="match status" value="1"/>
</dbReference>
<dbReference type="FunFam" id="3.30.420.40:FF:000004">
    <property type="entry name" value="Molecular chaperone DnaK"/>
    <property type="match status" value="1"/>
</dbReference>
<dbReference type="FunFam" id="3.90.640.10:FF:000003">
    <property type="entry name" value="Molecular chaperone DnaK"/>
    <property type="match status" value="1"/>
</dbReference>
<dbReference type="FunFam" id="1.20.1270.10:FF:000011">
    <property type="entry name" value="stress-70 protein, mitochondrial isoform X1"/>
    <property type="match status" value="1"/>
</dbReference>
<dbReference type="Gene3D" id="1.20.1270.10">
    <property type="match status" value="1"/>
</dbReference>
<dbReference type="Gene3D" id="3.30.30.30">
    <property type="match status" value="1"/>
</dbReference>
<dbReference type="Gene3D" id="3.30.420.40">
    <property type="match status" value="2"/>
</dbReference>
<dbReference type="Gene3D" id="3.90.640.10">
    <property type="entry name" value="Actin, Chain A, domain 4"/>
    <property type="match status" value="1"/>
</dbReference>
<dbReference type="Gene3D" id="2.60.34.10">
    <property type="entry name" value="Substrate Binding Domain Of DNAk, Chain A, domain 1"/>
    <property type="match status" value="1"/>
</dbReference>
<dbReference type="HAMAP" id="MF_00332">
    <property type="entry name" value="DnaK"/>
    <property type="match status" value="1"/>
</dbReference>
<dbReference type="InterPro" id="IPR043129">
    <property type="entry name" value="ATPase_NBD"/>
</dbReference>
<dbReference type="InterPro" id="IPR012725">
    <property type="entry name" value="Chaperone_DnaK"/>
</dbReference>
<dbReference type="InterPro" id="IPR018181">
    <property type="entry name" value="Heat_shock_70_CS"/>
</dbReference>
<dbReference type="InterPro" id="IPR029048">
    <property type="entry name" value="HSP70_C_sf"/>
</dbReference>
<dbReference type="InterPro" id="IPR029047">
    <property type="entry name" value="HSP70_peptide-bd_sf"/>
</dbReference>
<dbReference type="InterPro" id="IPR013126">
    <property type="entry name" value="Hsp_70_fam"/>
</dbReference>
<dbReference type="NCBIfam" id="NF001413">
    <property type="entry name" value="PRK00290.1"/>
    <property type="match status" value="1"/>
</dbReference>
<dbReference type="NCBIfam" id="NF003520">
    <property type="entry name" value="PRK05183.1"/>
    <property type="match status" value="1"/>
</dbReference>
<dbReference type="NCBIfam" id="TIGR02350">
    <property type="entry name" value="prok_dnaK"/>
    <property type="match status" value="1"/>
</dbReference>
<dbReference type="PANTHER" id="PTHR19375">
    <property type="entry name" value="HEAT SHOCK PROTEIN 70KDA"/>
    <property type="match status" value="1"/>
</dbReference>
<dbReference type="Pfam" id="PF00012">
    <property type="entry name" value="HSP70"/>
    <property type="match status" value="1"/>
</dbReference>
<dbReference type="PRINTS" id="PR00301">
    <property type="entry name" value="HEATSHOCK70"/>
</dbReference>
<dbReference type="SUPFAM" id="SSF53067">
    <property type="entry name" value="Actin-like ATPase domain"/>
    <property type="match status" value="2"/>
</dbReference>
<dbReference type="SUPFAM" id="SSF100920">
    <property type="entry name" value="Heat shock protein 70kD (HSP70), peptide-binding domain"/>
    <property type="match status" value="1"/>
</dbReference>
<dbReference type="PROSITE" id="PS00297">
    <property type="entry name" value="HSP70_1"/>
    <property type="match status" value="1"/>
</dbReference>
<dbReference type="PROSITE" id="PS00329">
    <property type="entry name" value="HSP70_2"/>
    <property type="match status" value="1"/>
</dbReference>
<dbReference type="PROSITE" id="PS01036">
    <property type="entry name" value="HSP70_3"/>
    <property type="match status" value="1"/>
</dbReference>
<organism>
    <name type="scientific">Pongo abelii</name>
    <name type="common">Sumatran orangutan</name>
    <name type="synonym">Pongo pygmaeus abelii</name>
    <dbReference type="NCBI Taxonomy" id="9601"/>
    <lineage>
        <taxon>Eukaryota</taxon>
        <taxon>Metazoa</taxon>
        <taxon>Chordata</taxon>
        <taxon>Craniata</taxon>
        <taxon>Vertebrata</taxon>
        <taxon>Euteleostomi</taxon>
        <taxon>Mammalia</taxon>
        <taxon>Eutheria</taxon>
        <taxon>Euarchontoglires</taxon>
        <taxon>Primates</taxon>
        <taxon>Haplorrhini</taxon>
        <taxon>Catarrhini</taxon>
        <taxon>Hominidae</taxon>
        <taxon>Pongo</taxon>
    </lineage>
</organism>
<accession>Q5R511</accession>
<accession>A0A2J8VPR7</accession>
<accession>H2PGP4</accession>
<proteinExistence type="evidence at transcript level"/>
<name>HSPA9_PONAB</name>
<comment type="function">
    <text evidence="2 5 6">Mitochondrial chaperone that plays a key role in mitochondrial protein import, folding, and assembly. Plays an essential role in the protein quality control system, the correct folding of proteins, the re-folding of misfolded proteins, and the targeting of proteins for subsequent degradation. These processes are achieved through cycles of ATP binding, ATP hydrolysis, and ADP release, mediated by co-chaperones. In mitochondria, it associates with the TIM (translocase of the inner membrane) protein complex to assist in the import and folding of mitochondrial proteins (By similarity). Plays an important role in mitochondrial iron-sulfur cluster (ISC) biogenesis, interacts with and stabilizes ISC cluster assembly proteins FXN, NFU1, NFS1 and ISCU. Regulates erythropoiesis via stabilization of ISC assembly. Regulates mitochondrial calcium-dependent apoptosis by coupling two calcium channels, ITPR1 and VDAC1, at the mitochondria-associated endoplasmic reticulum (ER) membrane to facilitate calcium transport from the ER lumen to the mitochondria intermembrane space, providing calcium for the downstream calcium channel MCU, which releases it into the mitochondrial matrix (By similarity). Although primarily located in the mitochondria, it is also found in other cellular compartments. In the cytosol, it associates with proteins involved in signaling, apoptosis, or senescence. It may play a role in cell cycle regulation via its interaction with and promotion of degradation of TP53 (By similarity). May play a role in the control of cell proliferation and cellular aging (By similarity). Protects against reactive oxygen species (ROS) (By similarity). Extracellular HSPA9 plays a cytoprotective role by preventing cell lysis following immune attack by the membrane attack complex by disrupting formation of the complex (By similarity).</text>
</comment>
<comment type="catalytic activity">
    <reaction evidence="5">
        <text>ATP + H2O = ADP + phosphate + H(+)</text>
        <dbReference type="Rhea" id="RHEA:13065"/>
        <dbReference type="ChEBI" id="CHEBI:15377"/>
        <dbReference type="ChEBI" id="CHEBI:15378"/>
        <dbReference type="ChEBI" id="CHEBI:30616"/>
        <dbReference type="ChEBI" id="CHEBI:43474"/>
        <dbReference type="ChEBI" id="CHEBI:456216"/>
        <dbReference type="EC" id="3.6.4.10"/>
    </reaction>
    <physiologicalReaction direction="left-to-right" evidence="5">
        <dbReference type="Rhea" id="RHEA:13066"/>
    </physiologicalReaction>
</comment>
<comment type="activity regulation">
    <text evidence="4 5">The chaperone activity is regulated by ATP-induced allosteric coupling of the nucleotide-binding (NBD) and substrate-binding (SBD) domains. ATP binding in the nucleotide-binding pocket (NBP) leads to a conformational change in the NBD, which is transferred through the interdomain linker (IDL) to the substrate-binding domain (SBD). This elicits a reduced substrate affinity and a faster substrate exchange rate. Upon hydrolysis of ATP to ADP, the protein undergoes a conformational change that increases its affinity for substrate proteins. It cycles through repeated phases of ATP hydrolysis and nucleotide exchange, facilitating repeated cycles of substrate binding and release (By similarity). Functions in collaboration with co-chaperones. Functions with the co-chaperone, DNLZ, to maintain solubility and regulate ATP hydrolysis. Nucleotide exchange factors, GRPEL1 and GRPEL2, accelerate nucleotide exchange (By similarity).</text>
</comment>
<comment type="subunit">
    <text evidence="5 7">Interacts strongly with the intermediate form of FXN and weakly with its mature form. Interacts with HSCB. Associates with the mitochondrial contact site and cristae organizing system (MICOS) complex, composed of at least MICOS10/MIC10, CHCHD3/MIC19, CHCHD6/MIC25, APOOL/MIC27, IMMT/MIC60, APOO/MIC23/MIC26 and QIL1/MIC13. This complex was also known under the names MINOS or MitOS complex. The MICOS complex associates with mitochondrial outer membrane proteins SAMM50, MTX1, MTX2 and DNAJC11, mitochondrial inner membrane protein TMEM11 and with HSPA9. Interacts with DNLZ, the interaction is required to prevent self-aggregation. Interacts with TESPA1. Interacts with PDPN. Interacts with NFU1, NFS1 and ISCU. Interacts with TP53; the interaction promotes TP53 degradation (By similarity). Interacts (via SBD domain) with UBXN2A; the interaction with UBXN2A inhibits HSPA9/MOT-2 interaction with and degradation of TP53, thereby promotes TP53 translocation to the nucleus (By similarity). Interacts with ITPR1 AND VDAC1; this interaction couples ITPR1 to VDAC1 (By similarity). Component of the TIM23 mitochondrial inner membrane pre-sequence translocase complex (By similarity).</text>
</comment>
<comment type="subcellular location">
    <subcellularLocation>
        <location evidence="5">Mitochondrion</location>
    </subcellularLocation>
    <subcellularLocation>
        <location evidence="5">Nucleus</location>
        <location evidence="5">Nucleolus</location>
    </subcellularLocation>
    <subcellularLocation>
        <location evidence="5">Cytoplasm</location>
    </subcellularLocation>
    <subcellularLocation>
        <location evidence="7">Mitochondrion matrix</location>
    </subcellularLocation>
    <text evidence="7">Found in a complex with HSPA9 and VDAC1 at the endoplasmic reticulum-mitochondria contact sites.</text>
</comment>
<comment type="domain">
    <text evidence="3">The N-terminal nucleotide binding domain (NBD) is responsible for binding and hydrolyzing ATP. The C-terminal substrate-binding domain (SBD) binds to the client/substrate proteins. The two domains are allosterically coupled so that, when ATP is bound to the NBD, the SBD binds relatively weakly to clients. When ADP is bound in the NBD, a conformational change enhances the affinity of the SBD for client proteins.</text>
</comment>
<comment type="similarity">
    <text evidence="9">Belongs to the heat shock protein 70 family.</text>
</comment>
<keyword id="KW-0007">Acetylation</keyword>
<keyword id="KW-0067">ATP-binding</keyword>
<keyword id="KW-0143">Chaperone</keyword>
<keyword id="KW-0963">Cytoplasm</keyword>
<keyword id="KW-0378">Hydrolase</keyword>
<keyword id="KW-0488">Methylation</keyword>
<keyword id="KW-0496">Mitochondrion</keyword>
<keyword id="KW-0547">Nucleotide-binding</keyword>
<keyword id="KW-0539">Nucleus</keyword>
<keyword id="KW-0597">Phosphoprotein</keyword>
<keyword id="KW-1185">Reference proteome</keyword>
<keyword id="KW-0809">Transit peptide</keyword>
<feature type="transit peptide" description="Mitochondrion" evidence="5">
    <location>
        <begin position="1"/>
        <end position="46"/>
    </location>
</feature>
<feature type="chain" id="PRO_0000314283" description="Stress-70 protein, mitochondrial">
    <location>
        <begin position="47"/>
        <end position="679"/>
    </location>
</feature>
<feature type="region of interest" description="Interaction with NFS1" evidence="5">
    <location>
        <begin position="1"/>
        <end position="432"/>
    </location>
</feature>
<feature type="region of interest" description="Nucleotide-binding domain (NBD)" evidence="5">
    <location>
        <begin position="63"/>
        <end position="431"/>
    </location>
</feature>
<feature type="region of interest" description="Interaction with FXN and ISCU" evidence="5">
    <location>
        <begin position="432"/>
        <end position="679"/>
    </location>
</feature>
<feature type="region of interest" description="Interdomain linker" evidence="5">
    <location>
        <begin position="432"/>
        <end position="441"/>
    </location>
</feature>
<feature type="region of interest" description="Substrate-binding domain (SBD)" evidence="5">
    <location>
        <begin position="442"/>
        <end position="679"/>
    </location>
</feature>
<feature type="region of interest" description="Disordered" evidence="8">
    <location>
        <begin position="656"/>
        <end position="679"/>
    </location>
</feature>
<feature type="compositionally biased region" description="Basic and acidic residues" evidence="8">
    <location>
        <begin position="669"/>
        <end position="679"/>
    </location>
</feature>
<feature type="binding site" evidence="5">
    <location>
        <position position="63"/>
    </location>
    <ligand>
        <name>ADP</name>
        <dbReference type="ChEBI" id="CHEBI:456216"/>
    </ligand>
</feature>
<feature type="binding site" evidence="5">
    <location>
        <position position="64"/>
    </location>
    <ligand>
        <name>ADP</name>
        <dbReference type="ChEBI" id="CHEBI:456216"/>
    </ligand>
</feature>
<feature type="binding site" evidence="5">
    <location>
        <position position="313"/>
    </location>
    <ligand>
        <name>ADP</name>
        <dbReference type="ChEBI" id="CHEBI:456216"/>
    </ligand>
</feature>
<feature type="binding site" evidence="5">
    <location>
        <position position="316"/>
    </location>
    <ligand>
        <name>ADP</name>
        <dbReference type="ChEBI" id="CHEBI:456216"/>
    </ligand>
</feature>
<feature type="binding site" evidence="5">
    <location>
        <position position="320"/>
    </location>
    <ligand>
        <name>ADP</name>
        <dbReference type="ChEBI" id="CHEBI:456216"/>
    </ligand>
</feature>
<feature type="binding site" evidence="5">
    <location>
        <position position="388"/>
    </location>
    <ligand>
        <name>ADP</name>
        <dbReference type="ChEBI" id="CHEBI:456216"/>
    </ligand>
</feature>
<feature type="binding site" evidence="5">
    <location>
        <position position="391"/>
    </location>
    <ligand>
        <name>ADP</name>
        <dbReference type="ChEBI" id="CHEBI:456216"/>
    </ligand>
</feature>
<feature type="modified residue" description="N6-acetyllysine" evidence="6">
    <location>
        <position position="76"/>
    </location>
</feature>
<feature type="modified residue" description="Phosphothreonine" evidence="5">
    <location>
        <position position="87"/>
    </location>
</feature>
<feature type="modified residue" description="N6-acetyllysine; alternate" evidence="5">
    <location>
        <position position="135"/>
    </location>
</feature>
<feature type="modified residue" description="N6-succinyllysine; alternate" evidence="6">
    <location>
        <position position="135"/>
    </location>
</feature>
<feature type="modified residue" description="N6-acetyllysine; alternate" evidence="5">
    <location>
        <position position="138"/>
    </location>
</feature>
<feature type="modified residue" description="N6-succinyllysine; alternate" evidence="6">
    <location>
        <position position="138"/>
    </location>
</feature>
<feature type="modified residue" description="N6-acetyllysine" evidence="5">
    <location>
        <position position="143"/>
    </location>
</feature>
<feature type="modified residue" description="N6-acetyllysine; alternate" evidence="6">
    <location>
        <position position="206"/>
    </location>
</feature>
<feature type="modified residue" description="N6-malonyllysine; alternate" evidence="1">
    <location>
        <position position="206"/>
    </location>
</feature>
<feature type="modified residue" description="N6-succinyllysine; alternate" evidence="6">
    <location>
        <position position="206"/>
    </location>
</feature>
<feature type="modified residue" description="N6-acetyllysine" evidence="5">
    <location>
        <position position="234"/>
    </location>
</feature>
<feature type="modified residue" description="N6-acetyllysine" evidence="5">
    <location>
        <position position="288"/>
    </location>
</feature>
<feature type="modified residue" description="N6-acetyllysine; alternate" evidence="5">
    <location>
        <position position="300"/>
    </location>
</feature>
<feature type="modified residue" description="N6-succinyllysine; alternate" evidence="6">
    <location>
        <position position="300"/>
    </location>
</feature>
<feature type="modified residue" description="N6-succinyllysine" evidence="6">
    <location>
        <position position="368"/>
    </location>
</feature>
<feature type="modified residue" description="N6-succinyllysine" evidence="6">
    <location>
        <position position="394"/>
    </location>
</feature>
<feature type="modified residue" description="Phosphoserine" evidence="5">
    <location>
        <position position="408"/>
    </location>
</feature>
<feature type="modified residue" description="Omega-N-methylarginine" evidence="5">
    <location>
        <position position="513"/>
    </location>
</feature>
<feature type="modified residue" description="N6-acetyllysine; alternate" evidence="5">
    <location>
        <position position="567"/>
    </location>
</feature>
<feature type="modified residue" description="N6-succinyllysine; alternate" evidence="6">
    <location>
        <position position="567"/>
    </location>
</feature>
<feature type="modified residue" description="N6-acetyllysine; alternate" evidence="6">
    <location>
        <position position="600"/>
    </location>
</feature>
<feature type="modified residue" description="N6-succinyllysine; alternate" evidence="6">
    <location>
        <position position="600"/>
    </location>
</feature>
<feature type="modified residue" description="N6-succinyllysine" evidence="6">
    <location>
        <position position="610"/>
    </location>
</feature>
<feature type="modified residue" description="N6-acetyllysine" evidence="6">
    <location>
        <position position="612"/>
    </location>
</feature>
<feature type="modified residue" description="N6-acetyllysine; alternate" evidence="5">
    <location>
        <position position="646"/>
    </location>
</feature>
<feature type="modified residue" description="N6-succinyllysine; alternate" evidence="6">
    <location>
        <position position="646"/>
    </location>
</feature>
<feature type="sequence conflict" description="In Ref. 1; CAH93155." evidence="9" ref="1">
    <original>H</original>
    <variation>Y</variation>
    <location>
        <position position="26"/>
    </location>
</feature>
<gene>
    <name evidence="5" type="primary">HSPA9</name>
</gene>
<evidence type="ECO:0000250" key="1"/>
<evidence type="ECO:0000250" key="2">
    <source>
        <dbReference type="UniProtKB" id="P0CS90"/>
    </source>
</evidence>
<evidence type="ECO:0000250" key="3">
    <source>
        <dbReference type="UniProtKB" id="P0DMV8"/>
    </source>
</evidence>
<evidence type="ECO:0000250" key="4">
    <source>
        <dbReference type="UniProtKB" id="P11021"/>
    </source>
</evidence>
<evidence type="ECO:0000250" key="5">
    <source>
        <dbReference type="UniProtKB" id="P38646"/>
    </source>
</evidence>
<evidence type="ECO:0000250" key="6">
    <source>
        <dbReference type="UniProtKB" id="P38647"/>
    </source>
</evidence>
<evidence type="ECO:0000250" key="7">
    <source>
        <dbReference type="UniProtKB" id="P48721"/>
    </source>
</evidence>
<evidence type="ECO:0000256" key="8">
    <source>
        <dbReference type="SAM" id="MobiDB-lite"/>
    </source>
</evidence>
<evidence type="ECO:0000305" key="9"/>
<protein>
    <recommendedName>
        <fullName evidence="5">Stress-70 protein, mitochondrial</fullName>
        <ecNumber evidence="5">3.6.4.10</ecNumber>
    </recommendedName>
    <alternativeName>
        <fullName>75 kDa glucose-regulated protein</fullName>
        <shortName>GRP-75</shortName>
    </alternativeName>
    <alternativeName>
        <fullName>Heat shock 70 kDa protein 9</fullName>
    </alternativeName>
</protein>
<sequence>MISASRAVAARLVGAAASRGPTAARHQDGWNGLSHEAFRIVSRRDYASEAIKGAVVGIDLGTTNSCVAVMEGKQAKVLENAEGARTTPSVVAFTADGERLVGMPAKRQAVTNPNNTFYATKRLIGRRYDDPEVQKDIKNVPFKIVRASNGDAWVEAHGKLYSPSQIGAFVLMKMKETAENYLGHTAKNAVITVPAYFNDSQRQATKDAGQISGLNVLRVINEPTAAALAYGLDKSEDKVIAVYDLGGGTFDISILEIQKGVFEVKSTNGDTFLGGEDFDQALLRHIVKEFKRETGVDLTKDNMALQRVREAAEKAKCELSSSVQTDINLPYLTMDSSGPKHLNMKLSRAQFEGIVTDLIRRTIAPCQKAMQDAEVSKSDIGEVILVGGMTRMPKVQQTVQDLFGRAPSKAVNPDEAVAIGAAIQGGVLAGDVTDVLLLDVTPLSLGIETLGGVFTKLINRNTTIPTKKSQVFSTAADGQTQVEIKVCQGEREMAGDNKLLGQFTLIGIPPAPRGVPQIEVTFDIDANGIVHVSAKDKGTGREQQIVIQSSGGLSKDDIENMVKNAEKYAEEDRRKKERVEAVNMAEGIIHDTETKMEEFKDQLPADECNKLKEEISKMRELLARKDSETGENIRQAASSLQQASLKLFEMAYKKMASEREGSGSSGTGEQKEDQKEEKQ</sequence>
<reference key="1">
    <citation type="submission" date="2004-11" db="EMBL/GenBank/DDBJ databases">
        <authorList>
            <consortium name="The German cDNA consortium"/>
        </authorList>
    </citation>
    <scope>NUCLEOTIDE SEQUENCE [LARGE SCALE MRNA]</scope>
    <source>
        <tissue>Brain cortex</tissue>
    </source>
</reference>
<reference key="2">
    <citation type="submission" date="2017-12" db="EMBL/GenBank/DDBJ databases">
        <title>High-resolution comparative analysis of great ape genomes.</title>
        <authorList>
            <person name="Pollen A."/>
            <person name="Hastie A."/>
            <person name="Hormozdiari F."/>
            <person name="Dougherty M."/>
            <person name="Liu R."/>
            <person name="Chaisson M."/>
            <person name="Hoppe E."/>
            <person name="Hill C."/>
            <person name="Pang A."/>
            <person name="Hillier L."/>
            <person name="Baker C."/>
            <person name="Armstrong J."/>
            <person name="Shendure J."/>
            <person name="Paten B."/>
            <person name="Wilson R."/>
            <person name="Chao H."/>
            <person name="Schneider V."/>
            <person name="Ventura M."/>
            <person name="Kronenberg Z."/>
            <person name="Murali S."/>
            <person name="Gordon D."/>
            <person name="Cantsilieris S."/>
            <person name="Munson K."/>
            <person name="Nelson B."/>
            <person name="Raja A."/>
            <person name="Underwood J."/>
            <person name="Diekhans M."/>
            <person name="Fiddes I."/>
            <person name="Haussler D."/>
            <person name="Eichler E."/>
        </authorList>
    </citation>
    <scope>NUCLEOTIDE SEQUENCE [LARGE SCALE GENOMIC DNA]</scope>
</reference>